<reference key="1">
    <citation type="journal article" date="2001" name="Nature">
        <title>Genome sequence of enterohaemorrhagic Escherichia coli O157:H7.</title>
        <authorList>
            <person name="Perna N.T."/>
            <person name="Plunkett G. III"/>
            <person name="Burland V."/>
            <person name="Mau B."/>
            <person name="Glasner J.D."/>
            <person name="Rose D.J."/>
            <person name="Mayhew G.F."/>
            <person name="Evans P.S."/>
            <person name="Gregor J."/>
            <person name="Kirkpatrick H.A."/>
            <person name="Posfai G."/>
            <person name="Hackett J."/>
            <person name="Klink S."/>
            <person name="Boutin A."/>
            <person name="Shao Y."/>
            <person name="Miller L."/>
            <person name="Grotbeck E.J."/>
            <person name="Davis N.W."/>
            <person name="Lim A."/>
            <person name="Dimalanta E.T."/>
            <person name="Potamousis K."/>
            <person name="Apodaca J."/>
            <person name="Anantharaman T.S."/>
            <person name="Lin J."/>
            <person name="Yen G."/>
            <person name="Schwartz D.C."/>
            <person name="Welch R.A."/>
            <person name="Blattner F.R."/>
        </authorList>
    </citation>
    <scope>NUCLEOTIDE SEQUENCE [LARGE SCALE GENOMIC DNA]</scope>
    <source>
        <strain>O157:H7 / EDL933 / ATCC 700927 / EHEC</strain>
    </source>
</reference>
<reference key="2">
    <citation type="journal article" date="2001" name="DNA Res.">
        <title>Complete genome sequence of enterohemorrhagic Escherichia coli O157:H7 and genomic comparison with a laboratory strain K-12.</title>
        <authorList>
            <person name="Hayashi T."/>
            <person name="Makino K."/>
            <person name="Ohnishi M."/>
            <person name="Kurokawa K."/>
            <person name="Ishii K."/>
            <person name="Yokoyama K."/>
            <person name="Han C.-G."/>
            <person name="Ohtsubo E."/>
            <person name="Nakayama K."/>
            <person name="Murata T."/>
            <person name="Tanaka M."/>
            <person name="Tobe T."/>
            <person name="Iida T."/>
            <person name="Takami H."/>
            <person name="Honda T."/>
            <person name="Sasakawa C."/>
            <person name="Ogasawara N."/>
            <person name="Yasunaga T."/>
            <person name="Kuhara S."/>
            <person name="Shiba T."/>
            <person name="Hattori M."/>
            <person name="Shinagawa H."/>
        </authorList>
    </citation>
    <scope>NUCLEOTIDE SEQUENCE [LARGE SCALE GENOMIC DNA]</scope>
    <source>
        <strain>O157:H7 / Sakai / RIMD 0509952 / EHEC</strain>
    </source>
</reference>
<proteinExistence type="inferred from homology"/>
<keyword id="KW-0997">Cell inner membrane</keyword>
<keyword id="KW-1003">Cell membrane</keyword>
<keyword id="KW-0249">Electron transport</keyword>
<keyword id="KW-0349">Heme</keyword>
<keyword id="KW-0408">Iron</keyword>
<keyword id="KW-0472">Membrane</keyword>
<keyword id="KW-0479">Metal-binding</keyword>
<keyword id="KW-1185">Reference proteome</keyword>
<keyword id="KW-0812">Transmembrane</keyword>
<keyword id="KW-1133">Transmembrane helix</keyword>
<keyword id="KW-0813">Transport</keyword>
<comment type="function">
    <text evidence="1">Allows to use formate as major electron donor during aerobic respiration. Subunit gamma is probably the cytochrome b556(FDO) component of the formate dehydrogenase (By similarity).</text>
</comment>
<comment type="cofactor">
    <cofactor evidence="1">
        <name>heme</name>
        <dbReference type="ChEBI" id="CHEBI:30413"/>
    </cofactor>
    <text evidence="1">Binds 2 heme groups per subunit. Heme 1 is located at the cytoplasmic interface, heme 2 is located at the periplasmic interface. Electrons are transferred from the periplasmic to the cytoplasmic heme.</text>
</comment>
<comment type="subunit">
    <text evidence="1">Formate dehydrogenase is a membrane-bound complex, formed by subunits alpha, beta and gamma.</text>
</comment>
<comment type="subcellular location">
    <subcellularLocation>
        <location evidence="1">Cell inner membrane</location>
        <topology evidence="1">Multi-pass membrane protein</topology>
    </subcellularLocation>
</comment>
<comment type="similarity">
    <text evidence="2">Belongs to the formate dehydrogenase gamma subunit family.</text>
</comment>
<protein>
    <recommendedName>
        <fullName>Formate dehydrogenase, cytochrome b556(fdo) subunit</fullName>
    </recommendedName>
    <alternativeName>
        <fullName>Aerobic formate dehydrogenase cytochrome b556 subunit</fullName>
    </alternativeName>
    <alternativeName>
        <fullName>FDH-Z subunit gamma</fullName>
    </alternativeName>
    <alternativeName>
        <fullName>Formate dehydrogenase-O subunit gamma</fullName>
    </alternativeName>
</protein>
<accession>P0AEL2</accession>
<accession>P32174</accession>
<feature type="chain" id="PRO_0000087215" description="Formate dehydrogenase, cytochrome b556(fdo) subunit">
    <location>
        <begin position="1"/>
        <end position="211"/>
    </location>
</feature>
<feature type="topological domain" description="Cytoplasmic" evidence="2">
    <location>
        <begin position="1"/>
        <end position="17"/>
    </location>
</feature>
<feature type="transmembrane region" description="Helical" evidence="2">
    <location>
        <begin position="18"/>
        <end position="32"/>
    </location>
</feature>
<feature type="topological domain" description="Periplasmic" evidence="2">
    <location>
        <begin position="33"/>
        <end position="53"/>
    </location>
</feature>
<feature type="transmembrane region" description="Helical" evidence="2">
    <location>
        <begin position="54"/>
        <end position="72"/>
    </location>
</feature>
<feature type="topological domain" description="Cytoplasmic" evidence="2">
    <location>
        <begin position="73"/>
        <end position="112"/>
    </location>
</feature>
<feature type="transmembrane region" description="Helical" evidence="2">
    <location>
        <begin position="113"/>
        <end position="130"/>
    </location>
</feature>
<feature type="topological domain" description="Periplasmic" evidence="2">
    <location>
        <begin position="131"/>
        <end position="151"/>
    </location>
</feature>
<feature type="transmembrane region" description="Helical" evidence="2">
    <location>
        <begin position="152"/>
        <end position="170"/>
    </location>
</feature>
<feature type="topological domain" description="Cytoplasmic" evidence="2">
    <location>
        <begin position="171"/>
        <end position="211"/>
    </location>
</feature>
<feature type="binding site" description="axial binding residue" evidence="1">
    <location>
        <position position="18"/>
    </location>
    <ligand>
        <name>heme b</name>
        <dbReference type="ChEBI" id="CHEBI:60344"/>
        <label>1</label>
    </ligand>
    <ligandPart>
        <name>Fe</name>
        <dbReference type="ChEBI" id="CHEBI:18248"/>
    </ligandPart>
</feature>
<feature type="binding site" description="axial binding residue" evidence="1">
    <location>
        <position position="57"/>
    </location>
    <ligand>
        <name>heme b</name>
        <dbReference type="ChEBI" id="CHEBI:60344"/>
        <label>2</label>
    </ligand>
    <ligandPart>
        <name>Fe</name>
        <dbReference type="ChEBI" id="CHEBI:18248"/>
    </ligandPart>
</feature>
<feature type="binding site" description="axial binding residue" evidence="1">
    <location>
        <position position="153"/>
    </location>
    <ligand>
        <name>heme b</name>
        <dbReference type="ChEBI" id="CHEBI:60344"/>
        <label>2</label>
    </ligand>
    <ligandPart>
        <name>Fe</name>
        <dbReference type="ChEBI" id="CHEBI:18248"/>
    </ligandPart>
</feature>
<feature type="binding site" description="axial binding residue" evidence="1">
    <location>
        <position position="167"/>
    </location>
    <ligand>
        <name>heme b</name>
        <dbReference type="ChEBI" id="CHEBI:60344"/>
        <label>1</label>
    </ligand>
    <ligandPart>
        <name>Fe</name>
        <dbReference type="ChEBI" id="CHEBI:18248"/>
    </ligandPart>
</feature>
<gene>
    <name type="primary">fdoI</name>
    <name type="ordered locus">Z5434</name>
    <name type="ordered locus">ECs4818</name>
</gene>
<name>FDOI_ECO57</name>
<dbReference type="EMBL" id="AE005174">
    <property type="protein sequence ID" value="AAG59085.1"/>
    <property type="molecule type" value="Genomic_DNA"/>
</dbReference>
<dbReference type="EMBL" id="BA000007">
    <property type="protein sequence ID" value="BAB38241.1"/>
    <property type="molecule type" value="Genomic_DNA"/>
</dbReference>
<dbReference type="PIR" id="A86078">
    <property type="entry name" value="A86078"/>
</dbReference>
<dbReference type="PIR" id="B91231">
    <property type="entry name" value="B91231"/>
</dbReference>
<dbReference type="RefSeq" id="NP_312845.1">
    <property type="nucleotide sequence ID" value="NC_002695.1"/>
</dbReference>
<dbReference type="RefSeq" id="WP_000829013.1">
    <property type="nucleotide sequence ID" value="NZ_VOAI01000016.1"/>
</dbReference>
<dbReference type="SMR" id="P0AEL2"/>
<dbReference type="STRING" id="155864.Z5434"/>
<dbReference type="GeneID" id="915078"/>
<dbReference type="GeneID" id="93778046"/>
<dbReference type="KEGG" id="ece:Z5434"/>
<dbReference type="KEGG" id="ecs:ECs_4818"/>
<dbReference type="PATRIC" id="fig|386585.9.peg.5034"/>
<dbReference type="eggNOG" id="COG2864">
    <property type="taxonomic scope" value="Bacteria"/>
</dbReference>
<dbReference type="HOGENOM" id="CLU_091368_1_1_6"/>
<dbReference type="OMA" id="DIVWAKN"/>
<dbReference type="Proteomes" id="UP000000558">
    <property type="component" value="Chromosome"/>
</dbReference>
<dbReference type="Proteomes" id="UP000002519">
    <property type="component" value="Chromosome"/>
</dbReference>
<dbReference type="GO" id="GO:0009326">
    <property type="term" value="C:formate dehydrogenase complex"/>
    <property type="evidence" value="ECO:0007669"/>
    <property type="project" value="InterPro"/>
</dbReference>
<dbReference type="GO" id="GO:0005886">
    <property type="term" value="C:plasma membrane"/>
    <property type="evidence" value="ECO:0007669"/>
    <property type="project" value="UniProtKB-SubCell"/>
</dbReference>
<dbReference type="GO" id="GO:0009055">
    <property type="term" value="F:electron transfer activity"/>
    <property type="evidence" value="ECO:0007669"/>
    <property type="project" value="InterPro"/>
</dbReference>
<dbReference type="GO" id="GO:0008863">
    <property type="term" value="F:formate dehydrogenase (NAD+) activity"/>
    <property type="evidence" value="ECO:0007669"/>
    <property type="project" value="InterPro"/>
</dbReference>
<dbReference type="GO" id="GO:0036397">
    <property type="term" value="F:formate dehydrogenase (quinone) activity"/>
    <property type="evidence" value="ECO:0007669"/>
    <property type="project" value="TreeGrafter"/>
</dbReference>
<dbReference type="GO" id="GO:0046872">
    <property type="term" value="F:metal ion binding"/>
    <property type="evidence" value="ECO:0007669"/>
    <property type="project" value="UniProtKB-KW"/>
</dbReference>
<dbReference type="GO" id="GO:0009061">
    <property type="term" value="P:anaerobic respiration"/>
    <property type="evidence" value="ECO:0007669"/>
    <property type="project" value="TreeGrafter"/>
</dbReference>
<dbReference type="GO" id="GO:0015944">
    <property type="term" value="P:formate oxidation"/>
    <property type="evidence" value="ECO:0007669"/>
    <property type="project" value="TreeGrafter"/>
</dbReference>
<dbReference type="GO" id="GO:0022904">
    <property type="term" value="P:respiratory electron transport chain"/>
    <property type="evidence" value="ECO:0007669"/>
    <property type="project" value="InterPro"/>
</dbReference>
<dbReference type="FunFam" id="1.20.950.20:FF:000002">
    <property type="entry name" value="Formate dehydrogenase cytochrome b556 subunit"/>
    <property type="match status" value="1"/>
</dbReference>
<dbReference type="Gene3D" id="1.20.950.20">
    <property type="entry name" value="Transmembrane di-heme cytochromes, Chain C"/>
    <property type="match status" value="1"/>
</dbReference>
<dbReference type="InterPro" id="IPR011577">
    <property type="entry name" value="Cyt_b561_bac/Ni-Hgenase"/>
</dbReference>
<dbReference type="InterPro" id="IPR016174">
    <property type="entry name" value="Di-haem_cyt_TM"/>
</dbReference>
<dbReference type="InterPro" id="IPR051817">
    <property type="entry name" value="FDH_cytochrome_b556_subunit"/>
</dbReference>
<dbReference type="InterPro" id="IPR006471">
    <property type="entry name" value="Formate_DH_gsu"/>
</dbReference>
<dbReference type="NCBIfam" id="TIGR01583">
    <property type="entry name" value="formate-DH-gamm"/>
    <property type="match status" value="1"/>
</dbReference>
<dbReference type="NCBIfam" id="NF007924">
    <property type="entry name" value="PRK10639.1"/>
    <property type="match status" value="1"/>
</dbReference>
<dbReference type="PANTHER" id="PTHR30074:SF2">
    <property type="entry name" value="FORMATE DEHYDROGENASE, CYTOCHROME B556(FDO) SUBUNIT"/>
    <property type="match status" value="1"/>
</dbReference>
<dbReference type="PANTHER" id="PTHR30074">
    <property type="entry name" value="FORMATE DEHYDROGENASE, NITRATE-INDUCIBLE, CYTOCHROME B556 FDN SUBUNIT"/>
    <property type="match status" value="1"/>
</dbReference>
<dbReference type="Pfam" id="PF01292">
    <property type="entry name" value="Ni_hydr_CYTB"/>
    <property type="match status" value="1"/>
</dbReference>
<dbReference type="SUPFAM" id="SSF81342">
    <property type="entry name" value="Transmembrane di-heme cytochromes"/>
    <property type="match status" value="1"/>
</dbReference>
<organism>
    <name type="scientific">Escherichia coli O157:H7</name>
    <dbReference type="NCBI Taxonomy" id="83334"/>
    <lineage>
        <taxon>Bacteria</taxon>
        <taxon>Pseudomonadati</taxon>
        <taxon>Pseudomonadota</taxon>
        <taxon>Gammaproteobacteria</taxon>
        <taxon>Enterobacterales</taxon>
        <taxon>Enterobacteriaceae</taxon>
        <taxon>Escherichia</taxon>
    </lineage>
</organism>
<evidence type="ECO:0000250" key="1"/>
<evidence type="ECO:0000305" key="2"/>
<sequence length="211" mass="24606">MKRRDTIVRYTAPERINHWITAFCFILAAVSGLGFLFPSFNWLMQIMGTPQLARILHPFVGVVMFASFIIMFFRYWHHNLINRDDIFWAKNIRKIVVNEEVGDTGRYNFGQKCVFWAAIIFLVLLLVSGVIIWRPYFAPAFSIPVIRFALMLHSFAAVALIVVIMVHIYAALWVKGTITAMVEGWVTSAWAKKHHPRWYREVRKTTEKKAE</sequence>